<dbReference type="EMBL" id="AF285592">
    <property type="protein sequence ID" value="AAK31971.1"/>
    <property type="molecule type" value="mRNA"/>
</dbReference>
<dbReference type="EMBL" id="BC069069">
    <property type="protein sequence ID" value="AAH69069.2"/>
    <property type="molecule type" value="mRNA"/>
</dbReference>
<dbReference type="EMBL" id="BC069538">
    <property type="protein sequence ID" value="AAH69538.2"/>
    <property type="molecule type" value="mRNA"/>
</dbReference>
<dbReference type="EMBL" id="BC100768">
    <property type="protein sequence ID" value="AAI00769.1"/>
    <property type="molecule type" value="mRNA"/>
</dbReference>
<dbReference type="EMBL" id="BC100769">
    <property type="protein sequence ID" value="AAI00770.1"/>
    <property type="molecule type" value="mRNA"/>
</dbReference>
<dbReference type="EMBL" id="BC100770">
    <property type="protein sequence ID" value="AAI00771.1"/>
    <property type="molecule type" value="mRNA"/>
</dbReference>
<dbReference type="CCDS" id="CCDS14227.1"/>
<dbReference type="RefSeq" id="NP_114100.1">
    <property type="nucleotide sequence ID" value="NM_031894.3"/>
</dbReference>
<dbReference type="SMR" id="Q9BXU8"/>
<dbReference type="BioGRID" id="119822">
    <property type="interactions" value="8"/>
</dbReference>
<dbReference type="FunCoup" id="Q9BXU8">
    <property type="interactions" value="20"/>
</dbReference>
<dbReference type="IntAct" id="Q9BXU8">
    <property type="interactions" value="6"/>
</dbReference>
<dbReference type="STRING" id="9606.ENSP00000368207"/>
<dbReference type="BioMuta" id="FTHL17"/>
<dbReference type="DMDM" id="18202740"/>
<dbReference type="MassIVE" id="Q9BXU8"/>
<dbReference type="PaxDb" id="9606-ENSP00000368207"/>
<dbReference type="PeptideAtlas" id="Q9BXU8"/>
<dbReference type="ProteomicsDB" id="79522"/>
<dbReference type="Antibodypedia" id="24719">
    <property type="antibodies" value="38 antibodies from 11 providers"/>
</dbReference>
<dbReference type="DNASU" id="53940"/>
<dbReference type="Ensembl" id="ENST00000359202.5">
    <property type="protein sequence ID" value="ENSP00000368207.2"/>
    <property type="gene ID" value="ENSG00000132446.7"/>
</dbReference>
<dbReference type="GeneID" id="53940"/>
<dbReference type="KEGG" id="hsa:53940"/>
<dbReference type="MANE-Select" id="ENST00000359202.5">
    <property type="protein sequence ID" value="ENSP00000368207.2"/>
    <property type="RefSeq nucleotide sequence ID" value="NM_031894.3"/>
    <property type="RefSeq protein sequence ID" value="NP_114100.1"/>
</dbReference>
<dbReference type="UCSC" id="uc004dcl.1">
    <property type="organism name" value="human"/>
</dbReference>
<dbReference type="AGR" id="HGNC:3987"/>
<dbReference type="CTD" id="53940"/>
<dbReference type="DisGeNET" id="53940"/>
<dbReference type="GeneCards" id="FTHL17"/>
<dbReference type="HGNC" id="HGNC:3987">
    <property type="gene designation" value="FTHL17"/>
</dbReference>
<dbReference type="HPA" id="ENSG00000132446">
    <property type="expression patterns" value="Tissue enriched (testis)"/>
</dbReference>
<dbReference type="MIM" id="300308">
    <property type="type" value="gene"/>
</dbReference>
<dbReference type="neXtProt" id="NX_Q9BXU8"/>
<dbReference type="OpenTargets" id="ENSG00000132446"/>
<dbReference type="PharmGKB" id="PA28402"/>
<dbReference type="VEuPathDB" id="HostDB:ENSG00000132446"/>
<dbReference type="eggNOG" id="KOG2332">
    <property type="taxonomic scope" value="Eukaryota"/>
</dbReference>
<dbReference type="GeneTree" id="ENSGT00940000165498"/>
<dbReference type="HOGENOM" id="CLU_065681_4_0_1"/>
<dbReference type="InParanoid" id="Q9BXU8"/>
<dbReference type="OMA" id="ECQGWES"/>
<dbReference type="OrthoDB" id="186462at2759"/>
<dbReference type="PAN-GO" id="Q9BXU8">
    <property type="GO annotations" value="4 GO annotations based on evolutionary models"/>
</dbReference>
<dbReference type="PhylomeDB" id="Q9BXU8"/>
<dbReference type="TreeFam" id="TF313885"/>
<dbReference type="PathwayCommons" id="Q9BXU8"/>
<dbReference type="SignaLink" id="Q9BXU8"/>
<dbReference type="BioGRID-ORCS" id="53940">
    <property type="hits" value="9 hits in 760 CRISPR screens"/>
</dbReference>
<dbReference type="ChiTaRS" id="FTHL17">
    <property type="organism name" value="human"/>
</dbReference>
<dbReference type="GenomeRNAi" id="53940"/>
<dbReference type="Pharos" id="Q9BXU8">
    <property type="development level" value="Tdark"/>
</dbReference>
<dbReference type="PRO" id="PR:Q9BXU8"/>
<dbReference type="Proteomes" id="UP000005640">
    <property type="component" value="Chromosome X"/>
</dbReference>
<dbReference type="RNAct" id="Q9BXU8">
    <property type="molecule type" value="protein"/>
</dbReference>
<dbReference type="Bgee" id="ENSG00000132446">
    <property type="expression patterns" value="Expressed in male germ line stem cell (sensu Vertebrata) in testis and 5 other cell types or tissues"/>
</dbReference>
<dbReference type="ExpressionAtlas" id="Q9BXU8">
    <property type="expression patterns" value="baseline and differential"/>
</dbReference>
<dbReference type="GO" id="GO:0005737">
    <property type="term" value="C:cytoplasm"/>
    <property type="evidence" value="ECO:0000318"/>
    <property type="project" value="GO_Central"/>
</dbReference>
<dbReference type="GO" id="GO:0008199">
    <property type="term" value="F:ferric iron binding"/>
    <property type="evidence" value="ECO:0000318"/>
    <property type="project" value="GO_Central"/>
</dbReference>
<dbReference type="GO" id="GO:0008198">
    <property type="term" value="F:ferrous iron binding"/>
    <property type="evidence" value="ECO:0000318"/>
    <property type="project" value="GO_Central"/>
</dbReference>
<dbReference type="GO" id="GO:0006879">
    <property type="term" value="P:intracellular iron ion homeostasis"/>
    <property type="evidence" value="ECO:0007669"/>
    <property type="project" value="UniProtKB-KW"/>
</dbReference>
<dbReference type="GO" id="GO:0006826">
    <property type="term" value="P:iron ion transport"/>
    <property type="evidence" value="ECO:0007669"/>
    <property type="project" value="InterPro"/>
</dbReference>
<dbReference type="CDD" id="cd01056">
    <property type="entry name" value="Euk_Ferritin"/>
    <property type="match status" value="1"/>
</dbReference>
<dbReference type="FunFam" id="1.20.1260.10:FF:000002">
    <property type="entry name" value="Ferritin, mitochondrial"/>
    <property type="match status" value="1"/>
</dbReference>
<dbReference type="Gene3D" id="1.20.1260.10">
    <property type="match status" value="1"/>
</dbReference>
<dbReference type="InterPro" id="IPR001519">
    <property type="entry name" value="Ferritin"/>
</dbReference>
<dbReference type="InterPro" id="IPR012347">
    <property type="entry name" value="Ferritin-like"/>
</dbReference>
<dbReference type="InterPro" id="IPR009040">
    <property type="entry name" value="Ferritin-like_diiron"/>
</dbReference>
<dbReference type="InterPro" id="IPR009078">
    <property type="entry name" value="Ferritin-like_SF"/>
</dbReference>
<dbReference type="InterPro" id="IPR014034">
    <property type="entry name" value="Ferritin_CS"/>
</dbReference>
<dbReference type="InterPro" id="IPR008331">
    <property type="entry name" value="Ferritin_DPS_dom"/>
</dbReference>
<dbReference type="PANTHER" id="PTHR11431">
    <property type="entry name" value="FERRITIN"/>
    <property type="match status" value="1"/>
</dbReference>
<dbReference type="PANTHER" id="PTHR11431:SF97">
    <property type="entry name" value="FERRITIN HEAVY POLYPEPTIDE-LIKE 17-RELATED"/>
    <property type="match status" value="1"/>
</dbReference>
<dbReference type="Pfam" id="PF00210">
    <property type="entry name" value="Ferritin"/>
    <property type="match status" value="1"/>
</dbReference>
<dbReference type="SUPFAM" id="SSF47240">
    <property type="entry name" value="Ferritin-like"/>
    <property type="match status" value="1"/>
</dbReference>
<dbReference type="PROSITE" id="PS00204">
    <property type="entry name" value="FERRITIN_2"/>
    <property type="match status" value="1"/>
</dbReference>
<dbReference type="PROSITE" id="PS50905">
    <property type="entry name" value="FERRITIN_LIKE"/>
    <property type="match status" value="1"/>
</dbReference>
<reference key="1">
    <citation type="journal article" date="2001" name="Nat. Genet.">
        <title>An abundance of X-linked genes expressed in spermatogonia.</title>
        <authorList>
            <person name="Wang P.J."/>
            <person name="McCarrey J.R."/>
            <person name="Yang F."/>
            <person name="Page D.C."/>
        </authorList>
    </citation>
    <scope>NUCLEOTIDE SEQUENCE [MRNA]</scope>
    <source>
        <tissue>Testis</tissue>
    </source>
</reference>
<reference key="2">
    <citation type="journal article" date="2004" name="Genome Res.">
        <title>The status, quality, and expansion of the NIH full-length cDNA project: the Mammalian Gene Collection (MGC).</title>
        <authorList>
            <consortium name="The MGC Project Team"/>
        </authorList>
    </citation>
    <scope>NUCLEOTIDE SEQUENCE [LARGE SCALE MRNA]</scope>
</reference>
<reference key="3">
    <citation type="journal article" date="2003" name="Int. J. Cancer">
        <title>Five new human cancer-germline genes identified among 12 genes expressed in spermatogonia.</title>
        <authorList>
            <person name="Loriot A."/>
            <person name="Boon T."/>
            <person name="De Smet C."/>
        </authorList>
    </citation>
    <scope>TISSUE SPECIFICITY</scope>
    <scope>IDENTIFICATION AS A CANCER/TESTIS ANTIGEN</scope>
</reference>
<evidence type="ECO:0000255" key="1">
    <source>
        <dbReference type="PROSITE-ProRule" id="PRU00085"/>
    </source>
</evidence>
<evidence type="ECO:0000269" key="2">
    <source>
    </source>
</evidence>
<evidence type="ECO:0000305" key="3"/>
<organism>
    <name type="scientific">Homo sapiens</name>
    <name type="common">Human</name>
    <dbReference type="NCBI Taxonomy" id="9606"/>
    <lineage>
        <taxon>Eukaryota</taxon>
        <taxon>Metazoa</taxon>
        <taxon>Chordata</taxon>
        <taxon>Craniata</taxon>
        <taxon>Vertebrata</taxon>
        <taxon>Euteleostomi</taxon>
        <taxon>Mammalia</taxon>
        <taxon>Eutheria</taxon>
        <taxon>Euarchontoglires</taxon>
        <taxon>Primates</taxon>
        <taxon>Haplorrhini</taxon>
        <taxon>Catarrhini</taxon>
        <taxon>Hominidae</taxon>
        <taxon>Homo</taxon>
    </lineage>
</organism>
<keyword id="KW-0408">Iron</keyword>
<keyword id="KW-0409">Iron storage</keyword>
<keyword id="KW-0479">Metal-binding</keyword>
<keyword id="KW-1267">Proteomics identification</keyword>
<keyword id="KW-1185">Reference proteome</keyword>
<gene>
    <name type="primary">FTHL17</name>
</gene>
<accession>Q9BXU8</accession>
<accession>Q6NT24</accession>
<accession>Q6NTE2</accession>
<protein>
    <recommendedName>
        <fullName>Ferritin heavy polypeptide-like 17</fullName>
    </recommendedName>
    <alternativeName>
        <fullName>Cancer/testis antigen 38</fullName>
        <shortName>CT38</shortName>
    </alternativeName>
</protein>
<sequence length="183" mass="21142">MATAQPSQVRQKYDTNCDAAINSHITLELYTSYLYLSMAFYFNRDDVALENFFRYFLRLSDDKMEHAQKLMRLQNLRGGHICLHDIRKPECQGWESGLVAMESAFHLEKNVNQSLLDLYQLAVEKGDPQLCHFLESHYLHEQVKTIKELGGYVSNLRKICSPEAGLAEYLFDKLTLGGRVKET</sequence>
<name>FHL17_HUMAN</name>
<comment type="interaction">
    <interactant intactId="EBI-12156897">
        <id>Q9BXU8</id>
    </interactant>
    <interactant intactId="EBI-12951679">
        <id>Q2KHT4-3</id>
        <label>GSG1</label>
    </interactant>
    <organismsDiffer>false</organismsDiffer>
    <experiments>3</experiments>
</comment>
<comment type="interaction">
    <interactant intactId="EBI-12156897">
        <id>Q9BXU8</id>
    </interactant>
    <interactant intactId="EBI-10171774">
        <id>P60410</id>
        <label>KRTAP10-8</label>
    </interactant>
    <organismsDiffer>false</organismsDiffer>
    <experiments>3</experiments>
</comment>
<comment type="interaction">
    <interactant intactId="EBI-12156897">
        <id>Q9BXU8</id>
    </interactant>
    <interactant intactId="EBI-22310682">
        <id>P0DPK4</id>
        <label>NOTCH2NLC</label>
    </interactant>
    <organismsDiffer>false</organismsDiffer>
    <experiments>3</experiments>
</comment>
<comment type="interaction">
    <interactant intactId="EBI-12156897">
        <id>Q9BXU8</id>
    </interactant>
    <interactant intactId="EBI-11529177">
        <id>Q9UHX1-2</id>
        <label>PUF60</label>
    </interactant>
    <organismsDiffer>false</organismsDiffer>
    <experiments>3</experiments>
</comment>
<comment type="interaction">
    <interactant intactId="EBI-12156897">
        <id>Q9BXU8</id>
    </interactant>
    <interactant intactId="EBI-720094">
        <id>Q96K37</id>
        <label>SLC35E1</label>
    </interactant>
    <organismsDiffer>false</organismsDiffer>
    <experiments>3</experiments>
</comment>
<comment type="interaction">
    <interactant intactId="EBI-12156897">
        <id>Q9BXU8</id>
    </interactant>
    <interactant intactId="EBI-11528917">
        <id>Q8WW34-2</id>
        <label>TMEM239</label>
    </interactant>
    <organismsDiffer>false</organismsDiffer>
    <experiments>3</experiments>
</comment>
<comment type="tissue specificity">
    <text evidence="2">Testis specific. Also expressed in several cancers.</text>
</comment>
<comment type="similarity">
    <text evidence="3">Belongs to the ferritin family.</text>
</comment>
<proteinExistence type="evidence at protein level"/>
<feature type="chain" id="PRO_0000201068" description="Ferritin heavy polypeptide-like 17">
    <location>
        <begin position="1"/>
        <end position="183"/>
    </location>
</feature>
<feature type="domain" description="Ferritin-like diiron" evidence="1">
    <location>
        <begin position="11"/>
        <end position="160"/>
    </location>
</feature>
<feature type="binding site" evidence="1">
    <location>
        <position position="28"/>
    </location>
    <ligand>
        <name>Fe cation</name>
        <dbReference type="ChEBI" id="CHEBI:24875"/>
    </ligand>
</feature>
<feature type="binding site" evidence="1">
    <location>
        <position position="66"/>
    </location>
    <ligand>
        <name>Fe cation</name>
        <dbReference type="ChEBI" id="CHEBI:24875"/>
    </ligand>
</feature>
<feature type="binding site" evidence="1">
    <location>
        <position position="108"/>
    </location>
    <ligand>
        <name>Fe cation</name>
        <dbReference type="ChEBI" id="CHEBI:24875"/>
    </ligand>
</feature>
<feature type="binding site" evidence="1">
    <location>
        <position position="142"/>
    </location>
    <ligand>
        <name>Fe cation</name>
        <dbReference type="ChEBI" id="CHEBI:24875"/>
    </ligand>
</feature>
<feature type="sequence variant" id="VAR_033929" description="In dbSNP:rs16989319.">
    <original>Q</original>
    <variation>H</variation>
    <location>
        <position position="120"/>
    </location>
</feature>
<feature type="sequence variant" id="VAR_049060" description="In dbSNP:rs17340519.">
    <original>Y</original>
    <variation>H</variation>
    <location>
        <position position="138"/>
    </location>
</feature>